<dbReference type="EC" id="2.7.8.20" evidence="1"/>
<dbReference type="EMBL" id="AM039952">
    <property type="protein sequence ID" value="CAJ22077.1"/>
    <property type="molecule type" value="Genomic_DNA"/>
</dbReference>
<dbReference type="RefSeq" id="WP_011346116.1">
    <property type="nucleotide sequence ID" value="NZ_CP017190.1"/>
</dbReference>
<dbReference type="SMR" id="Q3BYI6"/>
<dbReference type="STRING" id="456327.BJD11_20645"/>
<dbReference type="KEGG" id="xcv:XCV0446"/>
<dbReference type="eggNOG" id="COG1368">
    <property type="taxonomic scope" value="Bacteria"/>
</dbReference>
<dbReference type="HOGENOM" id="CLU_390221_0_0_6"/>
<dbReference type="UniPathway" id="UPA00637"/>
<dbReference type="Proteomes" id="UP000007069">
    <property type="component" value="Chromosome"/>
</dbReference>
<dbReference type="GO" id="GO:0005886">
    <property type="term" value="C:plasma membrane"/>
    <property type="evidence" value="ECO:0007669"/>
    <property type="project" value="UniProtKB-SubCell"/>
</dbReference>
<dbReference type="GO" id="GO:0008960">
    <property type="term" value="F:phosphatidylglycerol-membrane-oligosaccharide glycerophosphotransferase activity"/>
    <property type="evidence" value="ECO:0007669"/>
    <property type="project" value="UniProtKB-UniRule"/>
</dbReference>
<dbReference type="GO" id="GO:0009250">
    <property type="term" value="P:glucan biosynthetic process"/>
    <property type="evidence" value="ECO:0007669"/>
    <property type="project" value="UniProtKB-UniRule"/>
</dbReference>
<dbReference type="CDD" id="cd16015">
    <property type="entry name" value="LTA_synthase"/>
    <property type="match status" value="1"/>
</dbReference>
<dbReference type="Gene3D" id="3.40.720.10">
    <property type="entry name" value="Alkaline Phosphatase, subunit A"/>
    <property type="match status" value="1"/>
</dbReference>
<dbReference type="HAMAP" id="MF_01070">
    <property type="entry name" value="MdoB_OpgB"/>
    <property type="match status" value="1"/>
</dbReference>
<dbReference type="InterPro" id="IPR017850">
    <property type="entry name" value="Alkaline_phosphatase_core_sf"/>
</dbReference>
<dbReference type="InterPro" id="IPR020881">
    <property type="entry name" value="OpgB"/>
</dbReference>
<dbReference type="InterPro" id="IPR050448">
    <property type="entry name" value="OpgB/LTA_synthase_biosynth"/>
</dbReference>
<dbReference type="InterPro" id="IPR000917">
    <property type="entry name" value="Sulfatase_N"/>
</dbReference>
<dbReference type="NCBIfam" id="NF009027">
    <property type="entry name" value="PRK12363.1"/>
    <property type="match status" value="1"/>
</dbReference>
<dbReference type="PANTHER" id="PTHR47371">
    <property type="entry name" value="LIPOTEICHOIC ACID SYNTHASE"/>
    <property type="match status" value="1"/>
</dbReference>
<dbReference type="PANTHER" id="PTHR47371:SF3">
    <property type="entry name" value="PHOSPHOGLYCEROL TRANSFERASE I"/>
    <property type="match status" value="1"/>
</dbReference>
<dbReference type="Pfam" id="PF00884">
    <property type="entry name" value="Sulfatase"/>
    <property type="match status" value="1"/>
</dbReference>
<dbReference type="SUPFAM" id="SSF53649">
    <property type="entry name" value="Alkaline phosphatase-like"/>
    <property type="match status" value="1"/>
</dbReference>
<protein>
    <recommendedName>
        <fullName evidence="1">Phosphoglycerol transferase I</fullName>
        <ecNumber evidence="1">2.7.8.20</ecNumber>
    </recommendedName>
    <alternativeName>
        <fullName evidence="1">Phosphatidylglycerol--membrane-oligosaccharide glycerophosphotransferase</fullName>
    </alternativeName>
</protein>
<sequence>MHWMLLVSLLLLLWLLVASPRLAWLKAGLLSLFLLLLSVWGLVDRLSGDGINAATLYHLRADMDGAGVSDFSGYIAVFVGMLLLSLSPLLLVRVRRFQRPRGGGAVFAGFVGMLLVGIAASPLYRDGKRLYYQLRPVDYATVVPEYQVPQQPLHKRKNIVWIYGESLERTYFDEQVFPGLMPNLRALATEAVDVRNLASTEGSGWTIAGMVASMCGVPLTTAPGDENSMDRMGMFLPEARCLGDYLKDQGYRNHYVGGADASFAGKGRFLSSHGFDVVHDVHHFHDQGVAPKHFSAWGVHDDVLLDDAWDTFQTLSRAGQPFMLTTLTMDTHHPAGHLPLACKGQQYDSALGDIGLLHAIKCSDRLIGELVARIRNSRYGKNTIIVIASDHLAMPNDLSDVLAKQKRENLLLFLGKDIAPQQVLTRAGSTLDSGATLLQLLEPGMRTLGFGRSLLARDAPPSASVAASRDSGKDYPRYLAYARTLWTGRSTRMLRINGNGDVVVGVQQVRPPVLLEYDKDTNLKTVYLENTSRQFDRTHSKGTLAYVDRCTAFEDGSADGHWCALVVDRHQSMKLYRDPDLTRGIAVDAPLEATQQGPRPRVRQPIMLTQAARKTDAGRYMLELYAKRRPTRAFWVEAVSSERKVVLAQQWVVPDAAGRIRMPVGLEHAVEDLEIRAWLDYTEDVSVDDLALVKDIPVADRS</sequence>
<organism>
    <name type="scientific">Xanthomonas euvesicatoria pv. vesicatoria (strain 85-10)</name>
    <name type="common">Xanthomonas campestris pv. vesicatoria</name>
    <dbReference type="NCBI Taxonomy" id="316273"/>
    <lineage>
        <taxon>Bacteria</taxon>
        <taxon>Pseudomonadati</taxon>
        <taxon>Pseudomonadota</taxon>
        <taxon>Gammaproteobacteria</taxon>
        <taxon>Lysobacterales</taxon>
        <taxon>Lysobacteraceae</taxon>
        <taxon>Xanthomonas</taxon>
    </lineage>
</organism>
<evidence type="ECO:0000255" key="1">
    <source>
        <dbReference type="HAMAP-Rule" id="MF_01070"/>
    </source>
</evidence>
<reference key="1">
    <citation type="journal article" date="2005" name="J. Bacteriol.">
        <title>Insights into genome plasticity and pathogenicity of the plant pathogenic Bacterium Xanthomonas campestris pv. vesicatoria revealed by the complete genome sequence.</title>
        <authorList>
            <person name="Thieme F."/>
            <person name="Koebnik R."/>
            <person name="Bekel T."/>
            <person name="Berger C."/>
            <person name="Boch J."/>
            <person name="Buettner D."/>
            <person name="Caldana C."/>
            <person name="Gaigalat L."/>
            <person name="Goesmann A."/>
            <person name="Kay S."/>
            <person name="Kirchner O."/>
            <person name="Lanz C."/>
            <person name="Linke B."/>
            <person name="McHardy A.C."/>
            <person name="Meyer F."/>
            <person name="Mittenhuber G."/>
            <person name="Nies D.H."/>
            <person name="Niesbach-Kloesgen U."/>
            <person name="Patschkowski T."/>
            <person name="Rueckert C."/>
            <person name="Rupp O."/>
            <person name="Schneiker S."/>
            <person name="Schuster S.C."/>
            <person name="Vorhoelter F.J."/>
            <person name="Weber E."/>
            <person name="Puehler A."/>
            <person name="Bonas U."/>
            <person name="Bartels D."/>
            <person name="Kaiser O."/>
        </authorList>
    </citation>
    <scope>NUCLEOTIDE SEQUENCE [LARGE SCALE GENOMIC DNA]</scope>
    <source>
        <strain>85-10</strain>
    </source>
</reference>
<comment type="function">
    <text evidence="1">Transfers a phosphoglycerol residue from phosphatidylglycerol to the membrane-bound nascent glucan backbones.</text>
</comment>
<comment type="catalytic activity">
    <reaction evidence="1">
        <text>a phosphatidylglycerol + a membrane-derived-oligosaccharide D-glucose = a 1,2-diacyl-sn-glycerol + a membrane-derived-oligosaccharide 6-(glycerophospho)-D-glucose.</text>
        <dbReference type="EC" id="2.7.8.20"/>
    </reaction>
</comment>
<comment type="pathway">
    <text evidence="1">Glycan metabolism; osmoregulated periplasmic glucan (OPG) biosynthesis.</text>
</comment>
<comment type="subcellular location">
    <subcellularLocation>
        <location evidence="1">Cell inner membrane</location>
        <topology evidence="1">Multi-pass membrane protein</topology>
    </subcellularLocation>
</comment>
<comment type="similarity">
    <text evidence="1">Belongs to the OpgB family.</text>
</comment>
<keyword id="KW-0997">Cell inner membrane</keyword>
<keyword id="KW-1003">Cell membrane</keyword>
<keyword id="KW-0472">Membrane</keyword>
<keyword id="KW-0808">Transferase</keyword>
<keyword id="KW-0812">Transmembrane</keyword>
<keyword id="KW-1133">Transmembrane helix</keyword>
<name>OPGB_XANE5</name>
<proteinExistence type="inferred from homology"/>
<feature type="chain" id="PRO_1000064577" description="Phosphoglycerol transferase I">
    <location>
        <begin position="1"/>
        <end position="702"/>
    </location>
</feature>
<feature type="transmembrane region" description="Helical" evidence="1">
    <location>
        <begin position="2"/>
        <end position="22"/>
    </location>
</feature>
<feature type="transmembrane region" description="Helical" evidence="1">
    <location>
        <begin position="71"/>
        <end position="91"/>
    </location>
</feature>
<feature type="transmembrane region" description="Helical" evidence="1">
    <location>
        <begin position="103"/>
        <end position="123"/>
    </location>
</feature>
<accession>Q3BYI6</accession>
<gene>
    <name evidence="1" type="primary">opgB</name>
    <name type="ordered locus">XCV0446</name>
</gene>